<gene>
    <name evidence="1" type="primary">lpxC</name>
    <name type="ordered locus">Pput_4381</name>
</gene>
<feature type="chain" id="PRO_1000013221" description="UDP-3-O-acyl-N-acetylglucosamine deacetylase">
    <location>
        <begin position="1"/>
        <end position="303"/>
    </location>
</feature>
<feature type="active site" description="Proton donor" evidence="1">
    <location>
        <position position="264"/>
    </location>
</feature>
<feature type="binding site" evidence="1">
    <location>
        <position position="78"/>
    </location>
    <ligand>
        <name>Zn(2+)</name>
        <dbReference type="ChEBI" id="CHEBI:29105"/>
    </ligand>
</feature>
<feature type="binding site" evidence="1">
    <location>
        <position position="237"/>
    </location>
    <ligand>
        <name>Zn(2+)</name>
        <dbReference type="ChEBI" id="CHEBI:29105"/>
    </ligand>
</feature>
<feature type="binding site" evidence="1">
    <location>
        <position position="241"/>
    </location>
    <ligand>
        <name>Zn(2+)</name>
        <dbReference type="ChEBI" id="CHEBI:29105"/>
    </ligand>
</feature>
<keyword id="KW-0378">Hydrolase</keyword>
<keyword id="KW-0441">Lipid A biosynthesis</keyword>
<keyword id="KW-0444">Lipid biosynthesis</keyword>
<keyword id="KW-0443">Lipid metabolism</keyword>
<keyword id="KW-0479">Metal-binding</keyword>
<keyword id="KW-0862">Zinc</keyword>
<evidence type="ECO:0000255" key="1">
    <source>
        <dbReference type="HAMAP-Rule" id="MF_00388"/>
    </source>
</evidence>
<comment type="function">
    <text evidence="1">Catalyzes the hydrolysis of UDP-3-O-myristoyl-N-acetylglucosamine to form UDP-3-O-myristoylglucosamine and acetate, the committed step in lipid A biosynthesis.</text>
</comment>
<comment type="catalytic activity">
    <reaction evidence="1">
        <text>a UDP-3-O-[(3R)-3-hydroxyacyl]-N-acetyl-alpha-D-glucosamine + H2O = a UDP-3-O-[(3R)-3-hydroxyacyl]-alpha-D-glucosamine + acetate</text>
        <dbReference type="Rhea" id="RHEA:67816"/>
        <dbReference type="ChEBI" id="CHEBI:15377"/>
        <dbReference type="ChEBI" id="CHEBI:30089"/>
        <dbReference type="ChEBI" id="CHEBI:137740"/>
        <dbReference type="ChEBI" id="CHEBI:173225"/>
        <dbReference type="EC" id="3.5.1.108"/>
    </reaction>
</comment>
<comment type="cofactor">
    <cofactor evidence="1">
        <name>Zn(2+)</name>
        <dbReference type="ChEBI" id="CHEBI:29105"/>
    </cofactor>
</comment>
<comment type="pathway">
    <text evidence="1">Glycolipid biosynthesis; lipid IV(A) biosynthesis; lipid IV(A) from (3R)-3-hydroxytetradecanoyl-[acyl-carrier-protein] and UDP-N-acetyl-alpha-D-glucosamine: step 2/6.</text>
</comment>
<comment type="similarity">
    <text evidence="1">Belongs to the LpxC family.</text>
</comment>
<name>LPXC_PSEP1</name>
<reference key="1">
    <citation type="submission" date="2007-05" db="EMBL/GenBank/DDBJ databases">
        <title>Complete sequence of Pseudomonas putida F1.</title>
        <authorList>
            <consortium name="US DOE Joint Genome Institute"/>
            <person name="Copeland A."/>
            <person name="Lucas S."/>
            <person name="Lapidus A."/>
            <person name="Barry K."/>
            <person name="Detter J.C."/>
            <person name="Glavina del Rio T."/>
            <person name="Hammon N."/>
            <person name="Israni S."/>
            <person name="Dalin E."/>
            <person name="Tice H."/>
            <person name="Pitluck S."/>
            <person name="Chain P."/>
            <person name="Malfatti S."/>
            <person name="Shin M."/>
            <person name="Vergez L."/>
            <person name="Schmutz J."/>
            <person name="Larimer F."/>
            <person name="Land M."/>
            <person name="Hauser L."/>
            <person name="Kyrpides N."/>
            <person name="Lykidis A."/>
            <person name="Parales R."/>
            <person name="Richardson P."/>
        </authorList>
    </citation>
    <scope>NUCLEOTIDE SEQUENCE [LARGE SCALE GENOMIC DNA]</scope>
    <source>
        <strain>ATCC 700007 / DSM 6899 / JCM 31910 / BCRC 17059 / LMG 24140 / F1</strain>
    </source>
</reference>
<dbReference type="EC" id="3.5.1.108" evidence="1"/>
<dbReference type="EMBL" id="CP000712">
    <property type="protein sequence ID" value="ABQ80504.1"/>
    <property type="molecule type" value="Genomic_DNA"/>
</dbReference>
<dbReference type="SMR" id="A5W8P4"/>
<dbReference type="KEGG" id="ppf:Pput_4381"/>
<dbReference type="eggNOG" id="COG0774">
    <property type="taxonomic scope" value="Bacteria"/>
</dbReference>
<dbReference type="HOGENOM" id="CLU_046528_1_0_6"/>
<dbReference type="UniPathway" id="UPA00359">
    <property type="reaction ID" value="UER00478"/>
</dbReference>
<dbReference type="GO" id="GO:0016020">
    <property type="term" value="C:membrane"/>
    <property type="evidence" value="ECO:0007669"/>
    <property type="project" value="GOC"/>
</dbReference>
<dbReference type="GO" id="GO:0046872">
    <property type="term" value="F:metal ion binding"/>
    <property type="evidence" value="ECO:0007669"/>
    <property type="project" value="UniProtKB-KW"/>
</dbReference>
<dbReference type="GO" id="GO:0103117">
    <property type="term" value="F:UDP-3-O-acyl-N-acetylglucosamine deacetylase activity"/>
    <property type="evidence" value="ECO:0007669"/>
    <property type="project" value="UniProtKB-UniRule"/>
</dbReference>
<dbReference type="GO" id="GO:0009245">
    <property type="term" value="P:lipid A biosynthetic process"/>
    <property type="evidence" value="ECO:0007669"/>
    <property type="project" value="UniProtKB-UniRule"/>
</dbReference>
<dbReference type="FunFam" id="3.30.230.20:FF:000001">
    <property type="entry name" value="UDP-3-O-acyl-N-acetylglucosamine deacetylase"/>
    <property type="match status" value="1"/>
</dbReference>
<dbReference type="Gene3D" id="3.30.230.20">
    <property type="entry name" value="lpxc deacetylase, domain 1"/>
    <property type="match status" value="1"/>
</dbReference>
<dbReference type="Gene3D" id="3.30.1700.10">
    <property type="entry name" value="lpxc deacetylase, domain 2"/>
    <property type="match status" value="1"/>
</dbReference>
<dbReference type="HAMAP" id="MF_00388">
    <property type="entry name" value="LpxC"/>
    <property type="match status" value="1"/>
</dbReference>
<dbReference type="InterPro" id="IPR020568">
    <property type="entry name" value="Ribosomal_Su5_D2-typ_SF"/>
</dbReference>
<dbReference type="InterPro" id="IPR004463">
    <property type="entry name" value="UDP-acyl_GlcNac_deAcase"/>
</dbReference>
<dbReference type="InterPro" id="IPR011334">
    <property type="entry name" value="UDP-acyl_GlcNac_deAcase_C"/>
</dbReference>
<dbReference type="InterPro" id="IPR015870">
    <property type="entry name" value="UDP-acyl_N-AcGlcN_deAcase_N"/>
</dbReference>
<dbReference type="NCBIfam" id="TIGR00325">
    <property type="entry name" value="lpxC"/>
    <property type="match status" value="1"/>
</dbReference>
<dbReference type="PANTHER" id="PTHR33694">
    <property type="entry name" value="UDP-3-O-ACYL-N-ACETYLGLUCOSAMINE DEACETYLASE 1, MITOCHONDRIAL-RELATED"/>
    <property type="match status" value="1"/>
</dbReference>
<dbReference type="PANTHER" id="PTHR33694:SF1">
    <property type="entry name" value="UDP-3-O-ACYL-N-ACETYLGLUCOSAMINE DEACETYLASE 1, MITOCHONDRIAL-RELATED"/>
    <property type="match status" value="1"/>
</dbReference>
<dbReference type="Pfam" id="PF03331">
    <property type="entry name" value="LpxC"/>
    <property type="match status" value="1"/>
</dbReference>
<dbReference type="SUPFAM" id="SSF54211">
    <property type="entry name" value="Ribosomal protein S5 domain 2-like"/>
    <property type="match status" value="2"/>
</dbReference>
<proteinExistence type="inferred from homology"/>
<sequence>MIKQRTLKNTIRATGVGLHSGEKVYLTLKPAPVDTGIVFRRADLDPVVEIPARAANVGETTMSTTLVNGDVKVDTVEHLLSAMAGLGIDNAYVELSASEVPIMDGSAGPFVFLIQSAGLEEQDAAKKFIRILREVTVEEGDKRATFLPFEGFKVSFEIDFDHPVLRNRTQSASVDFSSTSFVKEVSRARTFGFMRDIEYLRKHNLALGGSVENAIVVDEDGVLNEDGLRYEDEFVKHKILDAIGDLYLLGNSLIGEFKGFKSGHALNNQLLRKLIAETDAWEVVTFEDASTAPISYMRPVAAV</sequence>
<organism>
    <name type="scientific">Pseudomonas putida (strain ATCC 700007 / DSM 6899 / JCM 31910 / BCRC 17059 / LMG 24140 / F1)</name>
    <dbReference type="NCBI Taxonomy" id="351746"/>
    <lineage>
        <taxon>Bacteria</taxon>
        <taxon>Pseudomonadati</taxon>
        <taxon>Pseudomonadota</taxon>
        <taxon>Gammaproteobacteria</taxon>
        <taxon>Pseudomonadales</taxon>
        <taxon>Pseudomonadaceae</taxon>
        <taxon>Pseudomonas</taxon>
    </lineage>
</organism>
<protein>
    <recommendedName>
        <fullName evidence="1">UDP-3-O-acyl-N-acetylglucosamine deacetylase</fullName>
        <shortName evidence="1">UDP-3-O-acyl-GlcNAc deacetylase</shortName>
        <ecNumber evidence="1">3.5.1.108</ecNumber>
    </recommendedName>
    <alternativeName>
        <fullName evidence="1">UDP-3-O-[R-3-hydroxymyristoyl]-N-acetylglucosamine deacetylase</fullName>
    </alternativeName>
</protein>
<accession>A5W8P4</accession>